<reference key="1">
    <citation type="journal article" date="2004" name="Proc. Natl. Acad. Sci. U.S.A.">
        <title>Genome sequence of Picrophilus torridus and its implications for life around pH 0.</title>
        <authorList>
            <person name="Fuetterer O."/>
            <person name="Angelov A."/>
            <person name="Liesegang H."/>
            <person name="Gottschalk G."/>
            <person name="Schleper C."/>
            <person name="Schepers B."/>
            <person name="Dock C."/>
            <person name="Antranikian G."/>
            <person name="Liebl W."/>
        </authorList>
    </citation>
    <scope>NUCLEOTIDE SEQUENCE [LARGE SCALE GENOMIC DNA]</scope>
    <source>
        <strain>ATCC 700027 / DSM 9790 / JCM 10055 / NBRC 100828 / KAW 2/3</strain>
    </source>
</reference>
<accession>Q6KZ42</accession>
<dbReference type="EC" id="3.1.3.18" evidence="1"/>
<dbReference type="EMBL" id="AE017261">
    <property type="protein sequence ID" value="AAT44010.1"/>
    <property type="molecule type" value="Genomic_DNA"/>
</dbReference>
<dbReference type="SMR" id="Q6KZ42"/>
<dbReference type="FunCoup" id="Q6KZ42">
    <property type="interactions" value="21"/>
</dbReference>
<dbReference type="STRING" id="263820.PTO1425"/>
<dbReference type="PaxDb" id="263820-PTO1425"/>
<dbReference type="KEGG" id="pto:PTO1425"/>
<dbReference type="eggNOG" id="arCOG01213">
    <property type="taxonomic scope" value="Archaea"/>
</dbReference>
<dbReference type="HOGENOM" id="CLU_044146_2_0_2"/>
<dbReference type="InParanoid" id="Q6KZ42"/>
<dbReference type="Proteomes" id="UP000000438">
    <property type="component" value="Chromosome"/>
</dbReference>
<dbReference type="GO" id="GO:0005829">
    <property type="term" value="C:cytosol"/>
    <property type="evidence" value="ECO:0007669"/>
    <property type="project" value="TreeGrafter"/>
</dbReference>
<dbReference type="GO" id="GO:0000287">
    <property type="term" value="F:magnesium ion binding"/>
    <property type="evidence" value="ECO:0007669"/>
    <property type="project" value="InterPro"/>
</dbReference>
<dbReference type="GO" id="GO:0008967">
    <property type="term" value="F:phosphoglycolate phosphatase activity"/>
    <property type="evidence" value="ECO:0007669"/>
    <property type="project" value="UniProtKB-UniRule"/>
</dbReference>
<dbReference type="CDD" id="cd07514">
    <property type="entry name" value="HAD_Pase"/>
    <property type="match status" value="1"/>
</dbReference>
<dbReference type="Gene3D" id="3.90.1070.10">
    <property type="match status" value="1"/>
</dbReference>
<dbReference type="Gene3D" id="3.40.50.1000">
    <property type="entry name" value="HAD superfamily/HAD-like"/>
    <property type="match status" value="1"/>
</dbReference>
<dbReference type="HAMAP" id="MF_01419">
    <property type="entry name" value="GPH_hydrolase_arch"/>
    <property type="match status" value="1"/>
</dbReference>
<dbReference type="InterPro" id="IPR036412">
    <property type="entry name" value="HAD-like_sf"/>
</dbReference>
<dbReference type="InterPro" id="IPR006379">
    <property type="entry name" value="HAD-SF_hydro_IIB"/>
</dbReference>
<dbReference type="InterPro" id="IPR023214">
    <property type="entry name" value="HAD_sf"/>
</dbReference>
<dbReference type="InterPro" id="IPR006382">
    <property type="entry name" value="PGPase"/>
</dbReference>
<dbReference type="NCBIfam" id="TIGR01484">
    <property type="entry name" value="HAD-SF-IIB"/>
    <property type="match status" value="1"/>
</dbReference>
<dbReference type="NCBIfam" id="TIGR01487">
    <property type="entry name" value="Pglycolate_arch"/>
    <property type="match status" value="1"/>
</dbReference>
<dbReference type="NCBIfam" id="NF002245">
    <property type="entry name" value="PRK01158.1"/>
    <property type="match status" value="1"/>
</dbReference>
<dbReference type="NCBIfam" id="TIGR01482">
    <property type="entry name" value="SPP-subfamily"/>
    <property type="match status" value="1"/>
</dbReference>
<dbReference type="PANTHER" id="PTHR10000:SF8">
    <property type="entry name" value="HAD SUPERFAMILY HYDROLASE-LIKE, TYPE 3"/>
    <property type="match status" value="1"/>
</dbReference>
<dbReference type="PANTHER" id="PTHR10000">
    <property type="entry name" value="PHOSPHOSERINE PHOSPHATASE"/>
    <property type="match status" value="1"/>
</dbReference>
<dbReference type="Pfam" id="PF08282">
    <property type="entry name" value="Hydrolase_3"/>
    <property type="match status" value="2"/>
</dbReference>
<dbReference type="SFLD" id="SFLDS00003">
    <property type="entry name" value="Haloacid_Dehalogenase"/>
    <property type="match status" value="1"/>
</dbReference>
<dbReference type="SFLD" id="SFLDF00446">
    <property type="entry name" value="phosphoglycolate_phosphatase_3"/>
    <property type="match status" value="1"/>
</dbReference>
<dbReference type="SUPFAM" id="SSF56784">
    <property type="entry name" value="HAD-like"/>
    <property type="match status" value="1"/>
</dbReference>
<protein>
    <recommendedName>
        <fullName evidence="1">Phosphoglycolate phosphatase</fullName>
        <shortName evidence="1">PGP</shortName>
        <shortName evidence="1">PGPase</shortName>
        <ecNumber evidence="1">3.1.3.18</ecNumber>
    </recommendedName>
</protein>
<evidence type="ECO:0000255" key="1">
    <source>
        <dbReference type="HAMAP-Rule" id="MF_01419"/>
    </source>
</evidence>
<keyword id="KW-0119">Carbohydrate metabolism</keyword>
<keyword id="KW-0378">Hydrolase</keyword>
<keyword id="KW-0460">Magnesium</keyword>
<keyword id="KW-0479">Metal-binding</keyword>
<gene>
    <name type="ordered locus">PTO1425</name>
</gene>
<comment type="function">
    <text evidence="1">Catalyzes the dephosphorylation of 2-phosphoglycolate.</text>
</comment>
<comment type="catalytic activity">
    <reaction evidence="1">
        <text>2-phosphoglycolate + H2O = glycolate + phosphate</text>
        <dbReference type="Rhea" id="RHEA:14369"/>
        <dbReference type="ChEBI" id="CHEBI:15377"/>
        <dbReference type="ChEBI" id="CHEBI:29805"/>
        <dbReference type="ChEBI" id="CHEBI:43474"/>
        <dbReference type="ChEBI" id="CHEBI:58033"/>
        <dbReference type="EC" id="3.1.3.18"/>
    </reaction>
</comment>
<comment type="cofactor">
    <cofactor evidence="1">
        <name>Mg(2+)</name>
        <dbReference type="ChEBI" id="CHEBI:18420"/>
    </cofactor>
</comment>
<comment type="similarity">
    <text evidence="1">Belongs to the archaeal SPP-like hydrolase family.</text>
</comment>
<proteinExistence type="inferred from homology"/>
<name>PGP_PICTO</name>
<organism>
    <name type="scientific">Picrophilus torridus (strain ATCC 700027 / DSM 9790 / JCM 10055 / NBRC 100828 / KAW 2/3)</name>
    <dbReference type="NCBI Taxonomy" id="1122961"/>
    <lineage>
        <taxon>Archaea</taxon>
        <taxon>Methanobacteriati</taxon>
        <taxon>Thermoplasmatota</taxon>
        <taxon>Thermoplasmata</taxon>
        <taxon>Thermoplasmatales</taxon>
        <taxon>Picrophilaceae</taxon>
        <taxon>Picrophilus</taxon>
    </lineage>
</organism>
<sequence>MFMTKDLFFVYIFTTMIKLVVLDVDGTLTDKSRMISVNAVNAIRNLKTKVALVSGNVLPVLYGLKIYIGFDGYIFAENGGIALINNNIEKFFEKDGPESFLNDISGYTSARGILTNRWRETSMAFTANHDEMDIIDREAASRDLYIVDSGFTLHILNKGQDKGFAVKKMIDIMNIDYNNVLVIGDSQNDESMFSLGTLSACPGNASEKIKEMSNYVSGKCYGDELFDVFRHFDLIH</sequence>
<feature type="chain" id="PRO_0000146721" description="Phosphoglycolate phosphatase">
    <location>
        <begin position="1"/>
        <end position="236"/>
    </location>
</feature>
<feature type="active site" description="Nucleophile" evidence="1">
    <location>
        <position position="23"/>
    </location>
</feature>
<feature type="binding site" evidence="1">
    <location>
        <position position="23"/>
    </location>
    <ligand>
        <name>Mg(2+)</name>
        <dbReference type="ChEBI" id="CHEBI:18420"/>
    </ligand>
</feature>
<feature type="binding site" evidence="1">
    <location>
        <position position="25"/>
    </location>
    <ligand>
        <name>Mg(2+)</name>
        <dbReference type="ChEBI" id="CHEBI:18420"/>
    </ligand>
</feature>
<feature type="binding site" evidence="1">
    <location>
        <position position="162"/>
    </location>
    <ligand>
        <name>substrate</name>
    </ligand>
</feature>
<feature type="binding site" evidence="1">
    <location>
        <position position="185"/>
    </location>
    <ligand>
        <name>Mg(2+)</name>
        <dbReference type="ChEBI" id="CHEBI:18420"/>
    </ligand>
</feature>
<feature type="binding site" evidence="1">
    <location>
        <position position="189"/>
    </location>
    <ligand>
        <name>Mg(2+)</name>
        <dbReference type="ChEBI" id="CHEBI:18420"/>
    </ligand>
</feature>